<reference key="1">
    <citation type="journal article" date="2006" name="Nature">
        <title>DNA sequence and analysis of human chromosome 8.</title>
        <authorList>
            <person name="Nusbaum C."/>
            <person name="Mikkelsen T.S."/>
            <person name="Zody M.C."/>
            <person name="Asakawa S."/>
            <person name="Taudien S."/>
            <person name="Garber M."/>
            <person name="Kodira C.D."/>
            <person name="Schueler M.G."/>
            <person name="Shimizu A."/>
            <person name="Whittaker C.A."/>
            <person name="Chang J.L."/>
            <person name="Cuomo C.A."/>
            <person name="Dewar K."/>
            <person name="FitzGerald M.G."/>
            <person name="Yang X."/>
            <person name="Allen N.R."/>
            <person name="Anderson S."/>
            <person name="Asakawa T."/>
            <person name="Blechschmidt K."/>
            <person name="Bloom T."/>
            <person name="Borowsky M.L."/>
            <person name="Butler J."/>
            <person name="Cook A."/>
            <person name="Corum B."/>
            <person name="DeArellano K."/>
            <person name="DeCaprio D."/>
            <person name="Dooley K.T."/>
            <person name="Dorris L. III"/>
            <person name="Engels R."/>
            <person name="Gloeckner G."/>
            <person name="Hafez N."/>
            <person name="Hagopian D.S."/>
            <person name="Hall J.L."/>
            <person name="Ishikawa S.K."/>
            <person name="Jaffe D.B."/>
            <person name="Kamat A."/>
            <person name="Kudoh J."/>
            <person name="Lehmann R."/>
            <person name="Lokitsang T."/>
            <person name="Macdonald P."/>
            <person name="Major J.E."/>
            <person name="Matthews C.D."/>
            <person name="Mauceli E."/>
            <person name="Menzel U."/>
            <person name="Mihalev A.H."/>
            <person name="Minoshima S."/>
            <person name="Murayama Y."/>
            <person name="Naylor J.W."/>
            <person name="Nicol R."/>
            <person name="Nguyen C."/>
            <person name="O'Leary S.B."/>
            <person name="O'Neill K."/>
            <person name="Parker S.C.J."/>
            <person name="Polley A."/>
            <person name="Raymond C.K."/>
            <person name="Reichwald K."/>
            <person name="Rodriguez J."/>
            <person name="Sasaki T."/>
            <person name="Schilhabel M."/>
            <person name="Siddiqui R."/>
            <person name="Smith C.L."/>
            <person name="Sneddon T.P."/>
            <person name="Talamas J.A."/>
            <person name="Tenzin P."/>
            <person name="Topham K."/>
            <person name="Venkataraman V."/>
            <person name="Wen G."/>
            <person name="Yamazaki S."/>
            <person name="Young S.K."/>
            <person name="Zeng Q."/>
            <person name="Zimmer A.R."/>
            <person name="Rosenthal A."/>
            <person name="Birren B.W."/>
            <person name="Platzer M."/>
            <person name="Shimizu N."/>
            <person name="Lander E.S."/>
        </authorList>
    </citation>
    <scope>NUCLEOTIDE SEQUENCE [LARGE SCALE GENOMIC DNA]</scope>
</reference>
<evidence type="ECO:0000256" key="1">
    <source>
        <dbReference type="SAM" id="MobiDB-lite"/>
    </source>
</evidence>
<evidence type="ECO:0000305" key="2"/>
<evidence type="ECO:0000312" key="3">
    <source>
        <dbReference type="HGNC" id="HGNC:32265"/>
    </source>
</evidence>
<gene>
    <name evidence="3" type="primary">FAM90A17</name>
    <name evidence="3" type="synonym">FAM90A17P</name>
</gene>
<sequence length="464" mass="49759">MMARRDPKSWAKRLVRAQTLQKQRRAPVGPRAPPPDEEDPRLKCKNCGAFGHTARSTRCPMKCWKAALVPATLGKKEGKENLKPWKPRVEANPGPLNKDKGEKEERPRQQDPQRKALLHMFSGKPPEKPLPNGKGSTESSDHLRVASGPMPVHTTSKRPRVDPVLADRSAAEMSGRGSVLASLSPLRKASLSSSSSLGPKERQTGAAADIPQPAVRHQGREPLLVVKPTHSRPEGGCREVPQAASKTHGLLQAARPQAQDKRPAVTSQPCPPAATHSLGLGSNLSFGPGAKRPAQAPIQACLNFPKKPRLGPFQIPESAIQGGELGAPENLQPPPAATELGPSTSPQMGRRTPAQVPSVDRQPPHSTPCLPTAQACTMSHHSAASHDGAQPLRVLFRRLENGRWSSSLLAAPSFHSPEKPGAFLAQSPHVSEKSEAPCVRVPPSVLYEDLQVSSSSEDSDSDLE</sequence>
<protein>
    <recommendedName>
        <fullName>Protein FAM90A17</fullName>
    </recommendedName>
</protein>
<name>F90AH_HUMAN</name>
<keyword id="KW-1185">Reference proteome</keyword>
<feature type="chain" id="PRO_0000455460" description="Protein FAM90A17">
    <location>
        <begin position="1"/>
        <end position="464"/>
    </location>
</feature>
<feature type="region of interest" description="Disordered" evidence="1">
    <location>
        <begin position="1"/>
        <end position="42"/>
    </location>
</feature>
<feature type="region of interest" description="Disordered" evidence="1">
    <location>
        <begin position="70"/>
        <end position="389"/>
    </location>
</feature>
<feature type="region of interest" description="Disordered" evidence="1">
    <location>
        <begin position="415"/>
        <end position="437"/>
    </location>
</feature>
<feature type="compositionally biased region" description="Basic and acidic residues" evidence="1">
    <location>
        <begin position="74"/>
        <end position="89"/>
    </location>
</feature>
<feature type="compositionally biased region" description="Basic and acidic residues" evidence="1">
    <location>
        <begin position="97"/>
        <end position="114"/>
    </location>
</feature>
<feature type="compositionally biased region" description="Low complexity" evidence="1">
    <location>
        <begin position="180"/>
        <end position="197"/>
    </location>
</feature>
<accession>P0DV74</accession>
<accession>A6NEW6</accession>
<dbReference type="EMBL" id="AC084121">
    <property type="status" value="NOT_ANNOTATED_CDS"/>
    <property type="molecule type" value="Genomic_DNA"/>
</dbReference>
<dbReference type="CCDS" id="CCDS94254.1"/>
<dbReference type="RefSeq" id="NP_001384320.1">
    <property type="nucleotide sequence ID" value="NM_001397391.1"/>
</dbReference>
<dbReference type="Ensembl" id="ENST00000650426.1">
    <property type="protein sequence ID" value="ENSP00000497508.1"/>
    <property type="gene ID" value="ENSG00000285720.1"/>
</dbReference>
<dbReference type="GeneID" id="728746"/>
<dbReference type="MANE-Select" id="ENST00000650426.1">
    <property type="protein sequence ID" value="ENSP00000497508.1"/>
    <property type="RefSeq nucleotide sequence ID" value="NM_001397391.1"/>
    <property type="RefSeq protein sequence ID" value="NP_001384320.1"/>
</dbReference>
<dbReference type="AGR" id="HGNC:32265"/>
<dbReference type="GeneCards" id="FAM90A17"/>
<dbReference type="HGNC" id="HGNC:32265">
    <property type="gene designation" value="FAM90A17"/>
</dbReference>
<dbReference type="HPA" id="ENSG00000285720">
    <property type="expression patterns" value="Not detected"/>
</dbReference>
<dbReference type="GeneTree" id="ENSGT00910000144208"/>
<dbReference type="OMA" id="STESCHY"/>
<dbReference type="PRO" id="PR:P0DV74"/>
<dbReference type="Proteomes" id="UP000005640">
    <property type="component" value="Chromosome 8"/>
</dbReference>
<dbReference type="InterPro" id="IPR039213">
    <property type="entry name" value="FAM90"/>
</dbReference>
<dbReference type="InterPro" id="IPR041670">
    <property type="entry name" value="Znf-CCHC_6"/>
</dbReference>
<dbReference type="PANTHER" id="PTHR16035:SF14">
    <property type="entry name" value="FAMILY WITH SEQUENCE SIMILARITY 90 MEMBER A11, PSEUDOGENE-RELATED"/>
    <property type="match status" value="1"/>
</dbReference>
<dbReference type="PANTHER" id="PTHR16035">
    <property type="entry name" value="PROTEIN FAM90A1"/>
    <property type="match status" value="1"/>
</dbReference>
<dbReference type="Pfam" id="PF15288">
    <property type="entry name" value="zf-CCHC_6"/>
    <property type="match status" value="1"/>
</dbReference>
<organism>
    <name type="scientific">Homo sapiens</name>
    <name type="common">Human</name>
    <dbReference type="NCBI Taxonomy" id="9606"/>
    <lineage>
        <taxon>Eukaryota</taxon>
        <taxon>Metazoa</taxon>
        <taxon>Chordata</taxon>
        <taxon>Craniata</taxon>
        <taxon>Vertebrata</taxon>
        <taxon>Euteleostomi</taxon>
        <taxon>Mammalia</taxon>
        <taxon>Eutheria</taxon>
        <taxon>Euarchontoglires</taxon>
        <taxon>Primates</taxon>
        <taxon>Haplorrhini</taxon>
        <taxon>Catarrhini</taxon>
        <taxon>Hominidae</taxon>
        <taxon>Homo</taxon>
    </lineage>
</organism>
<proteinExistence type="inferred from homology"/>
<comment type="similarity">
    <text evidence="2">Belongs to the FAM90 family.</text>
</comment>